<organism>
    <name type="scientific">Gallus gallus</name>
    <name type="common">Chicken</name>
    <dbReference type="NCBI Taxonomy" id="9031"/>
    <lineage>
        <taxon>Eukaryota</taxon>
        <taxon>Metazoa</taxon>
        <taxon>Chordata</taxon>
        <taxon>Craniata</taxon>
        <taxon>Vertebrata</taxon>
        <taxon>Euteleostomi</taxon>
        <taxon>Archelosauria</taxon>
        <taxon>Archosauria</taxon>
        <taxon>Dinosauria</taxon>
        <taxon>Saurischia</taxon>
        <taxon>Theropoda</taxon>
        <taxon>Coelurosauria</taxon>
        <taxon>Aves</taxon>
        <taxon>Neognathae</taxon>
        <taxon>Galloanserae</taxon>
        <taxon>Galliformes</taxon>
        <taxon>Phasianidae</taxon>
        <taxon>Phasianinae</taxon>
        <taxon>Gallus</taxon>
    </lineage>
</organism>
<gene>
    <name type="primary">RPS4</name>
</gene>
<keyword id="KW-0002">3D-structure</keyword>
<keyword id="KW-1185">Reference proteome</keyword>
<keyword id="KW-0687">Ribonucleoprotein</keyword>
<keyword id="KW-0689">Ribosomal protein</keyword>
<keyword id="KW-0694">RNA-binding</keyword>
<keyword id="KW-0699">rRNA-binding</keyword>
<comment type="similarity">
    <text evidence="2">Belongs to the eukaryotic ribosomal protein eS4 family.</text>
</comment>
<feature type="initiator methionine" description="Removed" evidence="1">
    <location>
        <position position="1"/>
    </location>
</feature>
<feature type="chain" id="PRO_0000130823" description="Small ribosomal subunit protein eS4">
    <location>
        <begin position="2"/>
        <end position="263"/>
    </location>
</feature>
<feature type="domain" description="S4 RNA-binding">
    <location>
        <begin position="42"/>
        <end position="104"/>
    </location>
</feature>
<proteinExistence type="evidence at protein level"/>
<sequence>MARGPKKHLKRVAAPKHWMLDKLTGVFAPRPSTGPHKLRECLPLIIFLRNRLKYALTGDEVKKICMQRFIKIDGKVRTDITYPAGFMDVISIEKTGEHFRLVYDTKGRFAVHRITAEEAKYKLCKVRKIFVGTKGIPHLVTHDARTIRYPDPLIKVNDTIQIDLETGKITDFIKFDTGNLCMVTGGANLGRIGVITNRERHPGSFDVVHVKDANGNSFATRLSNIFVIGKGNKPWISLPRGKGIRLTIAEERDKRLAAKQSSG</sequence>
<protein>
    <recommendedName>
        <fullName evidence="2">Small ribosomal subunit protein eS4</fullName>
    </recommendedName>
    <alternativeName>
        <fullName>40S ribosomal protein S4</fullName>
    </alternativeName>
</protein>
<evidence type="ECO:0000250" key="1"/>
<evidence type="ECO:0000305" key="2"/>
<dbReference type="EMBL" id="L24368">
    <property type="protein sequence ID" value="AAB59946.1"/>
    <property type="molecule type" value="mRNA"/>
</dbReference>
<dbReference type="PIR" id="A56537">
    <property type="entry name" value="A56537"/>
</dbReference>
<dbReference type="RefSeq" id="NP_990439.1">
    <property type="nucleotide sequence ID" value="NM_205108.1"/>
</dbReference>
<dbReference type="PDB" id="8Q7Z">
    <property type="method" value="EM"/>
    <property type="resolution" value="2.50 A"/>
    <property type="chains" value="Ad=1-263"/>
</dbReference>
<dbReference type="PDB" id="8Q87">
    <property type="method" value="EM"/>
    <property type="resolution" value="2.40 A"/>
    <property type="chains" value="Ad=1-263"/>
</dbReference>
<dbReference type="PDBsum" id="8Q7Z"/>
<dbReference type="PDBsum" id="8Q87"/>
<dbReference type="SMR" id="P47836"/>
<dbReference type="BioGRID" id="676272">
    <property type="interactions" value="1"/>
</dbReference>
<dbReference type="FunCoup" id="P47836">
    <property type="interactions" value="2174"/>
</dbReference>
<dbReference type="STRING" id="9031.ENSGALP00000052806"/>
<dbReference type="PaxDb" id="9031-ENSGALP00000007705"/>
<dbReference type="GeneID" id="396001"/>
<dbReference type="KEGG" id="gga:396001"/>
<dbReference type="CTD" id="6192"/>
<dbReference type="VEuPathDB" id="HostDB:geneid_396001"/>
<dbReference type="eggNOG" id="KOG0378">
    <property type="taxonomic scope" value="Eukaryota"/>
</dbReference>
<dbReference type="HOGENOM" id="CLU_060400_1_0_1"/>
<dbReference type="InParanoid" id="P47836"/>
<dbReference type="OMA" id="GHIQLNL"/>
<dbReference type="OrthoDB" id="1109245at2759"/>
<dbReference type="PhylomeDB" id="P47836"/>
<dbReference type="Reactome" id="R-GGA-1799339">
    <property type="pathway name" value="SRP-dependent cotranslational protein targeting to membrane"/>
</dbReference>
<dbReference type="Reactome" id="R-GGA-72649">
    <property type="pathway name" value="Translation initiation complex formation"/>
</dbReference>
<dbReference type="Reactome" id="R-GGA-72689">
    <property type="pathway name" value="Formation of a pool of free 40S subunits"/>
</dbReference>
<dbReference type="Reactome" id="R-GGA-72695">
    <property type="pathway name" value="Formation of the ternary complex, and subsequently, the 43S complex"/>
</dbReference>
<dbReference type="Reactome" id="R-GGA-72702">
    <property type="pathway name" value="Ribosomal scanning and start codon recognition"/>
</dbReference>
<dbReference type="Reactome" id="R-GGA-72706">
    <property type="pathway name" value="GTP hydrolysis and joining of the 60S ribosomal subunit"/>
</dbReference>
<dbReference type="Reactome" id="R-GGA-975956">
    <property type="pathway name" value="Nonsense Mediated Decay (NMD) independent of the Exon Junction Complex (EJC)"/>
</dbReference>
<dbReference type="Reactome" id="R-GGA-975957">
    <property type="pathway name" value="Nonsense Mediated Decay (NMD) enhanced by the Exon Junction Complex (EJC)"/>
</dbReference>
<dbReference type="PRO" id="PR:P47836"/>
<dbReference type="Proteomes" id="UP000000539">
    <property type="component" value="Chromosome 4"/>
</dbReference>
<dbReference type="Bgee" id="ENSGALG00000004831">
    <property type="expression patterns" value="Expressed in spleen and 12 other cell types or tissues"/>
</dbReference>
<dbReference type="GO" id="GO:0022627">
    <property type="term" value="C:cytosolic small ribosomal subunit"/>
    <property type="evidence" value="ECO:0000318"/>
    <property type="project" value="GO_Central"/>
</dbReference>
<dbReference type="GO" id="GO:0003723">
    <property type="term" value="F:RNA binding"/>
    <property type="evidence" value="ECO:0000318"/>
    <property type="project" value="GO_Central"/>
</dbReference>
<dbReference type="GO" id="GO:0019843">
    <property type="term" value="F:rRNA binding"/>
    <property type="evidence" value="ECO:0007669"/>
    <property type="project" value="UniProtKB-KW"/>
</dbReference>
<dbReference type="GO" id="GO:0003735">
    <property type="term" value="F:structural constituent of ribosome"/>
    <property type="evidence" value="ECO:0000318"/>
    <property type="project" value="GO_Central"/>
</dbReference>
<dbReference type="GO" id="GO:0006412">
    <property type="term" value="P:translation"/>
    <property type="evidence" value="ECO:0000318"/>
    <property type="project" value="GO_Central"/>
</dbReference>
<dbReference type="CDD" id="cd06087">
    <property type="entry name" value="KOW_RPS4"/>
    <property type="match status" value="1"/>
</dbReference>
<dbReference type="CDD" id="cd00165">
    <property type="entry name" value="S4"/>
    <property type="match status" value="1"/>
</dbReference>
<dbReference type="FunFam" id="2.30.30.30:FF:000005">
    <property type="entry name" value="40S ribosomal protein S4"/>
    <property type="match status" value="1"/>
</dbReference>
<dbReference type="FunFam" id="2.40.50.740:FF:000001">
    <property type="entry name" value="40S ribosomal protein S4"/>
    <property type="match status" value="1"/>
</dbReference>
<dbReference type="FunFam" id="3.10.290.10:FF:000051">
    <property type="entry name" value="40S ribosomal protein S4, X isoform"/>
    <property type="match status" value="1"/>
</dbReference>
<dbReference type="Gene3D" id="2.30.30.30">
    <property type="match status" value="1"/>
</dbReference>
<dbReference type="Gene3D" id="2.40.50.740">
    <property type="match status" value="1"/>
</dbReference>
<dbReference type="Gene3D" id="3.10.290.10">
    <property type="entry name" value="RNA-binding S4 domain"/>
    <property type="match status" value="1"/>
</dbReference>
<dbReference type="HAMAP" id="MF_00485">
    <property type="entry name" value="Ribosomal_eS4"/>
    <property type="match status" value="1"/>
</dbReference>
<dbReference type="InterPro" id="IPR005824">
    <property type="entry name" value="KOW"/>
</dbReference>
<dbReference type="InterPro" id="IPR014722">
    <property type="entry name" value="Rib_uL2_dom2"/>
</dbReference>
<dbReference type="InterPro" id="IPR000876">
    <property type="entry name" value="Ribosomal_eS4"/>
</dbReference>
<dbReference type="InterPro" id="IPR032277">
    <property type="entry name" value="Ribosomal_eS4_C"/>
</dbReference>
<dbReference type="InterPro" id="IPR013845">
    <property type="entry name" value="Ribosomal_eS4_central_region"/>
</dbReference>
<dbReference type="InterPro" id="IPR038237">
    <property type="entry name" value="Ribosomal_eS4_central_sf"/>
</dbReference>
<dbReference type="InterPro" id="IPR041982">
    <property type="entry name" value="Ribosomal_eS4_KOW"/>
</dbReference>
<dbReference type="InterPro" id="IPR013843">
    <property type="entry name" value="Ribosomal_eS4_N"/>
</dbReference>
<dbReference type="InterPro" id="IPR018199">
    <property type="entry name" value="Ribosomal_eS4_N_CS"/>
</dbReference>
<dbReference type="InterPro" id="IPR002942">
    <property type="entry name" value="S4_RNA-bd"/>
</dbReference>
<dbReference type="InterPro" id="IPR036986">
    <property type="entry name" value="S4_RNA-bd_sf"/>
</dbReference>
<dbReference type="PANTHER" id="PTHR11581">
    <property type="entry name" value="30S/40S RIBOSOMAL PROTEIN S4"/>
    <property type="match status" value="1"/>
</dbReference>
<dbReference type="PANTHER" id="PTHR11581:SF0">
    <property type="entry name" value="SMALL RIBOSOMAL SUBUNIT PROTEIN ES4"/>
    <property type="match status" value="1"/>
</dbReference>
<dbReference type="Pfam" id="PF16121">
    <property type="entry name" value="40S_S4_C"/>
    <property type="match status" value="1"/>
</dbReference>
<dbReference type="Pfam" id="PF00467">
    <property type="entry name" value="KOW"/>
    <property type="match status" value="1"/>
</dbReference>
<dbReference type="Pfam" id="PF00900">
    <property type="entry name" value="Ribosomal_S4e"/>
    <property type="match status" value="1"/>
</dbReference>
<dbReference type="Pfam" id="PF08071">
    <property type="entry name" value="RS4NT"/>
    <property type="match status" value="1"/>
</dbReference>
<dbReference type="PIRSF" id="PIRSF002116">
    <property type="entry name" value="Ribosomal_S4"/>
    <property type="match status" value="1"/>
</dbReference>
<dbReference type="SMART" id="SM00363">
    <property type="entry name" value="S4"/>
    <property type="match status" value="1"/>
</dbReference>
<dbReference type="PROSITE" id="PS00528">
    <property type="entry name" value="RIBOSOMAL_S4E"/>
    <property type="match status" value="1"/>
</dbReference>
<dbReference type="PROSITE" id="PS50889">
    <property type="entry name" value="S4"/>
    <property type="match status" value="1"/>
</dbReference>
<name>RS4_CHICK</name>
<reference key="1">
    <citation type="journal article" date="1994" name="Mol. Cell. Biol.">
        <title>Structure and function of ribosomal protein S4 genes on the human and mouse sex chromosomes.</title>
        <authorList>
            <person name="Zinn A.R."/>
            <person name="Alagappan R.K."/>
            <person name="Brown L.G."/>
            <person name="Wool I.G."/>
            <person name="Page D.C."/>
        </authorList>
    </citation>
    <scope>NUCLEOTIDE SEQUENCE [MRNA]</scope>
    <source>
        <strain>White leghorn</strain>
        <tissue>Eye</tissue>
    </source>
</reference>
<accession>P47836</accession>